<organism>
    <name type="scientific">Citrifermentans bemidjiense (strain ATCC BAA-1014 / DSM 16622 / JCM 12645 / Bem)</name>
    <name type="common">Geobacter bemidjiensis</name>
    <dbReference type="NCBI Taxonomy" id="404380"/>
    <lineage>
        <taxon>Bacteria</taxon>
        <taxon>Pseudomonadati</taxon>
        <taxon>Thermodesulfobacteriota</taxon>
        <taxon>Desulfuromonadia</taxon>
        <taxon>Geobacterales</taxon>
        <taxon>Geobacteraceae</taxon>
        <taxon>Citrifermentans</taxon>
    </lineage>
</organism>
<keyword id="KW-0963">Cytoplasm</keyword>
<keyword id="KW-0227">DNA damage</keyword>
<keyword id="KW-0233">DNA recombination</keyword>
<keyword id="KW-0234">DNA repair</keyword>
<keyword id="KW-0238">DNA-binding</keyword>
<keyword id="KW-0255">Endonuclease</keyword>
<keyword id="KW-0378">Hydrolase</keyword>
<keyword id="KW-0460">Magnesium</keyword>
<keyword id="KW-0479">Metal-binding</keyword>
<keyword id="KW-0540">Nuclease</keyword>
<keyword id="KW-1185">Reference proteome</keyword>
<comment type="function">
    <text evidence="1">The RuvA-RuvB-RuvC complex processes Holliday junction (HJ) DNA during genetic recombination and DNA repair. Endonuclease that resolves HJ intermediates. Cleaves cruciform DNA by making single-stranded nicks across the HJ at symmetrical positions within the homologous arms, yielding a 5'-phosphate and a 3'-hydroxyl group; requires a central core of homology in the junction. The consensus cleavage sequence is 5'-(A/T)TT(C/G)-3'. Cleavage occurs on the 3'-side of the TT dinucleotide at the point of strand exchange. HJ branch migration catalyzed by RuvA-RuvB allows RuvC to scan DNA until it finds its consensus sequence, where it cleaves and resolves the cruciform DNA.</text>
</comment>
<comment type="catalytic activity">
    <reaction evidence="1">
        <text>Endonucleolytic cleavage at a junction such as a reciprocal single-stranded crossover between two homologous DNA duplexes (Holliday junction).</text>
        <dbReference type="EC" id="3.1.21.10"/>
    </reaction>
</comment>
<comment type="cofactor">
    <cofactor evidence="1">
        <name>Mg(2+)</name>
        <dbReference type="ChEBI" id="CHEBI:18420"/>
    </cofactor>
    <text evidence="1">Binds 2 Mg(2+) ion per subunit.</text>
</comment>
<comment type="subunit">
    <text evidence="1">Homodimer which binds Holliday junction (HJ) DNA. The HJ becomes 2-fold symmetrical on binding to RuvC with unstacked arms; it has a different conformation from HJ DNA in complex with RuvA. In the full resolvosome a probable DNA-RuvA(4)-RuvB(12)-RuvC(2) complex forms which resolves the HJ.</text>
</comment>
<comment type="subcellular location">
    <subcellularLocation>
        <location evidence="1">Cytoplasm</location>
    </subcellularLocation>
</comment>
<comment type="similarity">
    <text evidence="1">Belongs to the RuvC family.</text>
</comment>
<dbReference type="EC" id="3.1.21.10" evidence="1"/>
<dbReference type="EMBL" id="CP001124">
    <property type="protein sequence ID" value="ACH40310.1"/>
    <property type="molecule type" value="Genomic_DNA"/>
</dbReference>
<dbReference type="RefSeq" id="WP_012531743.1">
    <property type="nucleotide sequence ID" value="NC_011146.1"/>
</dbReference>
<dbReference type="SMR" id="B5EAH1"/>
<dbReference type="STRING" id="404380.Gbem_3314"/>
<dbReference type="KEGG" id="gbm:Gbem_3314"/>
<dbReference type="eggNOG" id="COG0817">
    <property type="taxonomic scope" value="Bacteria"/>
</dbReference>
<dbReference type="HOGENOM" id="CLU_091257_3_1_7"/>
<dbReference type="OrthoDB" id="9805499at2"/>
<dbReference type="Proteomes" id="UP000008825">
    <property type="component" value="Chromosome"/>
</dbReference>
<dbReference type="GO" id="GO:0005737">
    <property type="term" value="C:cytoplasm"/>
    <property type="evidence" value="ECO:0007669"/>
    <property type="project" value="UniProtKB-SubCell"/>
</dbReference>
<dbReference type="GO" id="GO:0048476">
    <property type="term" value="C:Holliday junction resolvase complex"/>
    <property type="evidence" value="ECO:0007669"/>
    <property type="project" value="UniProtKB-UniRule"/>
</dbReference>
<dbReference type="GO" id="GO:0008821">
    <property type="term" value="F:crossover junction DNA endonuclease activity"/>
    <property type="evidence" value="ECO:0007669"/>
    <property type="project" value="UniProtKB-UniRule"/>
</dbReference>
<dbReference type="GO" id="GO:0003677">
    <property type="term" value="F:DNA binding"/>
    <property type="evidence" value="ECO:0007669"/>
    <property type="project" value="UniProtKB-KW"/>
</dbReference>
<dbReference type="GO" id="GO:0000287">
    <property type="term" value="F:magnesium ion binding"/>
    <property type="evidence" value="ECO:0007669"/>
    <property type="project" value="UniProtKB-UniRule"/>
</dbReference>
<dbReference type="GO" id="GO:0006310">
    <property type="term" value="P:DNA recombination"/>
    <property type="evidence" value="ECO:0007669"/>
    <property type="project" value="UniProtKB-UniRule"/>
</dbReference>
<dbReference type="GO" id="GO:0006281">
    <property type="term" value="P:DNA repair"/>
    <property type="evidence" value="ECO:0007669"/>
    <property type="project" value="UniProtKB-UniRule"/>
</dbReference>
<dbReference type="CDD" id="cd16962">
    <property type="entry name" value="RuvC"/>
    <property type="match status" value="1"/>
</dbReference>
<dbReference type="FunFam" id="3.30.420.10:FF:000002">
    <property type="entry name" value="Crossover junction endodeoxyribonuclease RuvC"/>
    <property type="match status" value="1"/>
</dbReference>
<dbReference type="Gene3D" id="3.30.420.10">
    <property type="entry name" value="Ribonuclease H-like superfamily/Ribonuclease H"/>
    <property type="match status" value="1"/>
</dbReference>
<dbReference type="HAMAP" id="MF_00034">
    <property type="entry name" value="RuvC"/>
    <property type="match status" value="1"/>
</dbReference>
<dbReference type="InterPro" id="IPR012337">
    <property type="entry name" value="RNaseH-like_sf"/>
</dbReference>
<dbReference type="InterPro" id="IPR036397">
    <property type="entry name" value="RNaseH_sf"/>
</dbReference>
<dbReference type="InterPro" id="IPR020563">
    <property type="entry name" value="X-over_junc_endoDNase_Mg_BS"/>
</dbReference>
<dbReference type="InterPro" id="IPR002176">
    <property type="entry name" value="X-over_junc_endoDNase_RuvC"/>
</dbReference>
<dbReference type="NCBIfam" id="NF000711">
    <property type="entry name" value="PRK00039.2-1"/>
    <property type="match status" value="1"/>
</dbReference>
<dbReference type="NCBIfam" id="TIGR00228">
    <property type="entry name" value="ruvC"/>
    <property type="match status" value="1"/>
</dbReference>
<dbReference type="PANTHER" id="PTHR30194">
    <property type="entry name" value="CROSSOVER JUNCTION ENDODEOXYRIBONUCLEASE RUVC"/>
    <property type="match status" value="1"/>
</dbReference>
<dbReference type="PANTHER" id="PTHR30194:SF3">
    <property type="entry name" value="CROSSOVER JUNCTION ENDODEOXYRIBONUCLEASE RUVC"/>
    <property type="match status" value="1"/>
</dbReference>
<dbReference type="Pfam" id="PF02075">
    <property type="entry name" value="RuvC"/>
    <property type="match status" value="1"/>
</dbReference>
<dbReference type="PRINTS" id="PR00696">
    <property type="entry name" value="RSOLVASERUVC"/>
</dbReference>
<dbReference type="SUPFAM" id="SSF53098">
    <property type="entry name" value="Ribonuclease H-like"/>
    <property type="match status" value="1"/>
</dbReference>
<dbReference type="PROSITE" id="PS01321">
    <property type="entry name" value="RUVC"/>
    <property type="match status" value="1"/>
</dbReference>
<feature type="chain" id="PRO_1000090529" description="Crossover junction endodeoxyribonuclease RuvC">
    <location>
        <begin position="1"/>
        <end position="164"/>
    </location>
</feature>
<feature type="active site" evidence="1">
    <location>
        <position position="7"/>
    </location>
</feature>
<feature type="active site" evidence="1">
    <location>
        <position position="67"/>
    </location>
</feature>
<feature type="active site" evidence="1">
    <location>
        <position position="139"/>
    </location>
</feature>
<feature type="binding site" evidence="1">
    <location>
        <position position="7"/>
    </location>
    <ligand>
        <name>Mg(2+)</name>
        <dbReference type="ChEBI" id="CHEBI:18420"/>
        <label>1</label>
    </ligand>
</feature>
<feature type="binding site" evidence="1">
    <location>
        <position position="67"/>
    </location>
    <ligand>
        <name>Mg(2+)</name>
        <dbReference type="ChEBI" id="CHEBI:18420"/>
        <label>2</label>
    </ligand>
</feature>
<feature type="binding site" evidence="1">
    <location>
        <position position="139"/>
    </location>
    <ligand>
        <name>Mg(2+)</name>
        <dbReference type="ChEBI" id="CHEBI:18420"/>
        <label>1</label>
    </ligand>
</feature>
<sequence>MIILGIDPGSRKTGYGIISKQGNRLIHVDNGAIFTQSAKDFPERLEKIFTGLSEIIAQYRPEVVAVEDVFLAKNAQSALKLGQARGAAIVAAVNVGLPVHEYTAMQVKQAVVGTGRAEKAQVQQMIKALLNLPEVAQEDASDALAVAICHAHSAGINALFKNVR</sequence>
<name>RUVC_CITBB</name>
<protein>
    <recommendedName>
        <fullName evidence="1">Crossover junction endodeoxyribonuclease RuvC</fullName>
        <ecNumber evidence="1">3.1.21.10</ecNumber>
    </recommendedName>
    <alternativeName>
        <fullName evidence="1">Holliday junction nuclease RuvC</fullName>
    </alternativeName>
    <alternativeName>
        <fullName evidence="1">Holliday junction resolvase RuvC</fullName>
    </alternativeName>
</protein>
<gene>
    <name evidence="1" type="primary">ruvC</name>
    <name type="ordered locus">Gbem_3314</name>
</gene>
<evidence type="ECO:0000255" key="1">
    <source>
        <dbReference type="HAMAP-Rule" id="MF_00034"/>
    </source>
</evidence>
<proteinExistence type="inferred from homology"/>
<reference key="1">
    <citation type="submission" date="2008-07" db="EMBL/GenBank/DDBJ databases">
        <title>Complete sequence of Geobacter bemidjiensis BEM.</title>
        <authorList>
            <consortium name="US DOE Joint Genome Institute"/>
            <person name="Lucas S."/>
            <person name="Copeland A."/>
            <person name="Lapidus A."/>
            <person name="Glavina del Rio T."/>
            <person name="Dalin E."/>
            <person name="Tice H."/>
            <person name="Bruce D."/>
            <person name="Goodwin L."/>
            <person name="Pitluck S."/>
            <person name="Kiss H."/>
            <person name="Brettin T."/>
            <person name="Detter J.C."/>
            <person name="Han C."/>
            <person name="Kuske C.R."/>
            <person name="Schmutz J."/>
            <person name="Larimer F."/>
            <person name="Land M."/>
            <person name="Hauser L."/>
            <person name="Kyrpides N."/>
            <person name="Lykidis A."/>
            <person name="Lovley D."/>
            <person name="Richardson P."/>
        </authorList>
    </citation>
    <scope>NUCLEOTIDE SEQUENCE [LARGE SCALE GENOMIC DNA]</scope>
    <source>
        <strain>ATCC BAA-1014 / DSM 16622 / JCM 12645 / Bem</strain>
    </source>
</reference>
<accession>B5EAH1</accession>